<accession>Q6MSP8</accession>
<comment type="function">
    <text evidence="1">Located on the platform of the 30S subunit, it bridges several disparate RNA helices of the 16S rRNA. Forms part of the Shine-Dalgarno cleft in the 70S ribosome.</text>
</comment>
<comment type="subunit">
    <text evidence="1">Part of the 30S ribosomal subunit. Interacts with proteins S7 and S18. Binds to IF-3.</text>
</comment>
<comment type="similarity">
    <text evidence="1">Belongs to the universal ribosomal protein uS11 family.</text>
</comment>
<sequence>MANPKPQAKKKIKKNIPKGIAHIHSTFNNTIVTVSDEKGNVLSWSSAGAIGFKGSKKSTPYAAQLISEAAAKGAMDNGVKTVSVEVKGPGPGRDAAIRALQMAGLEITSIKDTTPIPHNGVRPRKRPRG</sequence>
<evidence type="ECO:0000255" key="1">
    <source>
        <dbReference type="HAMAP-Rule" id="MF_01310"/>
    </source>
</evidence>
<evidence type="ECO:0000305" key="2"/>
<feature type="chain" id="PRO_0000123179" description="Small ribosomal subunit protein uS11">
    <location>
        <begin position="1"/>
        <end position="129"/>
    </location>
</feature>
<name>RS11_MYCMS</name>
<proteinExistence type="inferred from homology"/>
<reference key="1">
    <citation type="journal article" date="2004" name="Genome Res.">
        <title>The genome sequence of Mycoplasma mycoides subsp. mycoides SC type strain PG1T, the causative agent of contagious bovine pleuropneumonia (CBPP).</title>
        <authorList>
            <person name="Westberg J."/>
            <person name="Persson A."/>
            <person name="Holmberg A."/>
            <person name="Goesmann A."/>
            <person name="Lundeberg J."/>
            <person name="Johansson K.-E."/>
            <person name="Pettersson B."/>
            <person name="Uhlen M."/>
        </authorList>
    </citation>
    <scope>NUCLEOTIDE SEQUENCE [LARGE SCALE GENOMIC DNA]</scope>
    <source>
        <strain>CCUG 32753 / NCTC 10114 / PG1</strain>
    </source>
</reference>
<organism>
    <name type="scientific">Mycoplasma mycoides subsp. mycoides SC (strain CCUG 32753 / NCTC 10114 / PG1)</name>
    <dbReference type="NCBI Taxonomy" id="272632"/>
    <lineage>
        <taxon>Bacteria</taxon>
        <taxon>Bacillati</taxon>
        <taxon>Mycoplasmatota</taxon>
        <taxon>Mollicutes</taxon>
        <taxon>Mycoplasmataceae</taxon>
        <taxon>Mycoplasma</taxon>
    </lineage>
</organism>
<protein>
    <recommendedName>
        <fullName evidence="1">Small ribosomal subunit protein uS11</fullName>
    </recommendedName>
    <alternativeName>
        <fullName evidence="2">30S ribosomal protein S11</fullName>
    </alternativeName>
</protein>
<keyword id="KW-1185">Reference proteome</keyword>
<keyword id="KW-0687">Ribonucleoprotein</keyword>
<keyword id="KW-0689">Ribosomal protein</keyword>
<keyword id="KW-0694">RNA-binding</keyword>
<keyword id="KW-0699">rRNA-binding</keyword>
<dbReference type="EMBL" id="BX293980">
    <property type="protein sequence ID" value="CAE77340.1"/>
    <property type="molecule type" value="Genomic_DNA"/>
</dbReference>
<dbReference type="RefSeq" id="NP_975698.1">
    <property type="nucleotide sequence ID" value="NC_005364.2"/>
</dbReference>
<dbReference type="RefSeq" id="WP_008362476.1">
    <property type="nucleotide sequence ID" value="NC_005364.2"/>
</dbReference>
<dbReference type="SMR" id="Q6MSP8"/>
<dbReference type="STRING" id="272632.MSC_0722"/>
<dbReference type="GeneID" id="93426157"/>
<dbReference type="KEGG" id="mmy:MSC_0722"/>
<dbReference type="PATRIC" id="fig|272632.4.peg.777"/>
<dbReference type="eggNOG" id="COG0100">
    <property type="taxonomic scope" value="Bacteria"/>
</dbReference>
<dbReference type="HOGENOM" id="CLU_072439_5_0_14"/>
<dbReference type="PRO" id="PR:Q6MSP8"/>
<dbReference type="Proteomes" id="UP000001016">
    <property type="component" value="Chromosome"/>
</dbReference>
<dbReference type="GO" id="GO:1990904">
    <property type="term" value="C:ribonucleoprotein complex"/>
    <property type="evidence" value="ECO:0007669"/>
    <property type="project" value="UniProtKB-KW"/>
</dbReference>
<dbReference type="GO" id="GO:0005840">
    <property type="term" value="C:ribosome"/>
    <property type="evidence" value="ECO:0007669"/>
    <property type="project" value="UniProtKB-KW"/>
</dbReference>
<dbReference type="GO" id="GO:0019843">
    <property type="term" value="F:rRNA binding"/>
    <property type="evidence" value="ECO:0007669"/>
    <property type="project" value="UniProtKB-UniRule"/>
</dbReference>
<dbReference type="GO" id="GO:0003735">
    <property type="term" value="F:structural constituent of ribosome"/>
    <property type="evidence" value="ECO:0007669"/>
    <property type="project" value="InterPro"/>
</dbReference>
<dbReference type="GO" id="GO:0006412">
    <property type="term" value="P:translation"/>
    <property type="evidence" value="ECO:0007669"/>
    <property type="project" value="UniProtKB-UniRule"/>
</dbReference>
<dbReference type="FunFam" id="3.30.420.80:FF:000001">
    <property type="entry name" value="30S ribosomal protein S11"/>
    <property type="match status" value="1"/>
</dbReference>
<dbReference type="Gene3D" id="3.30.420.80">
    <property type="entry name" value="Ribosomal protein S11"/>
    <property type="match status" value="1"/>
</dbReference>
<dbReference type="HAMAP" id="MF_01310">
    <property type="entry name" value="Ribosomal_uS11"/>
    <property type="match status" value="1"/>
</dbReference>
<dbReference type="InterPro" id="IPR001971">
    <property type="entry name" value="Ribosomal_uS11"/>
</dbReference>
<dbReference type="InterPro" id="IPR019981">
    <property type="entry name" value="Ribosomal_uS11_bac-type"/>
</dbReference>
<dbReference type="InterPro" id="IPR018102">
    <property type="entry name" value="Ribosomal_uS11_CS"/>
</dbReference>
<dbReference type="InterPro" id="IPR036967">
    <property type="entry name" value="Ribosomal_uS11_sf"/>
</dbReference>
<dbReference type="NCBIfam" id="NF003698">
    <property type="entry name" value="PRK05309.1"/>
    <property type="match status" value="1"/>
</dbReference>
<dbReference type="NCBIfam" id="TIGR03632">
    <property type="entry name" value="uS11_bact"/>
    <property type="match status" value="1"/>
</dbReference>
<dbReference type="PANTHER" id="PTHR11759">
    <property type="entry name" value="40S RIBOSOMAL PROTEIN S14/30S RIBOSOMAL PROTEIN S11"/>
    <property type="match status" value="1"/>
</dbReference>
<dbReference type="Pfam" id="PF00411">
    <property type="entry name" value="Ribosomal_S11"/>
    <property type="match status" value="1"/>
</dbReference>
<dbReference type="PIRSF" id="PIRSF002131">
    <property type="entry name" value="Ribosomal_S11"/>
    <property type="match status" value="1"/>
</dbReference>
<dbReference type="SUPFAM" id="SSF53137">
    <property type="entry name" value="Translational machinery components"/>
    <property type="match status" value="1"/>
</dbReference>
<dbReference type="PROSITE" id="PS00054">
    <property type="entry name" value="RIBOSOMAL_S11"/>
    <property type="match status" value="1"/>
</dbReference>
<gene>
    <name evidence="1" type="primary">rpsK</name>
    <name type="ordered locus">MSC_0722</name>
</gene>